<feature type="chain" id="PRO_1000008538" description="4-hydroxy-tetrahydrodipicolinate reductase">
    <location>
        <begin position="1"/>
        <end position="272"/>
    </location>
</feature>
<feature type="active site" description="Proton donor/acceptor" evidence="1">
    <location>
        <position position="157"/>
    </location>
</feature>
<feature type="active site" description="Proton donor" evidence="1">
    <location>
        <position position="161"/>
    </location>
</feature>
<feature type="binding site" evidence="1">
    <location>
        <begin position="10"/>
        <end position="15"/>
    </location>
    <ligand>
        <name>NAD(+)</name>
        <dbReference type="ChEBI" id="CHEBI:57540"/>
    </ligand>
</feature>
<feature type="binding site" evidence="1">
    <location>
        <position position="36"/>
    </location>
    <ligand>
        <name>NAD(+)</name>
        <dbReference type="ChEBI" id="CHEBI:57540"/>
    </ligand>
</feature>
<feature type="binding site" evidence="1">
    <location>
        <begin position="100"/>
        <end position="102"/>
    </location>
    <ligand>
        <name>NAD(+)</name>
        <dbReference type="ChEBI" id="CHEBI:57540"/>
    </ligand>
</feature>
<feature type="binding site" evidence="1">
    <location>
        <begin position="124"/>
        <end position="127"/>
    </location>
    <ligand>
        <name>NAD(+)</name>
        <dbReference type="ChEBI" id="CHEBI:57540"/>
    </ligand>
</feature>
<feature type="binding site" evidence="1">
    <location>
        <position position="158"/>
    </location>
    <ligand>
        <name>(S)-2,3,4,5-tetrahydrodipicolinate</name>
        <dbReference type="ChEBI" id="CHEBI:16845"/>
    </ligand>
</feature>
<feature type="binding site" evidence="1">
    <location>
        <begin position="167"/>
        <end position="168"/>
    </location>
    <ligand>
        <name>(S)-2,3,4,5-tetrahydrodipicolinate</name>
        <dbReference type="ChEBI" id="CHEBI:16845"/>
    </ligand>
</feature>
<comment type="function">
    <text evidence="1">Catalyzes the conversion of 4-hydroxy-tetrahydrodipicolinate (HTPA) to tetrahydrodipicolinate.</text>
</comment>
<comment type="catalytic activity">
    <reaction evidence="1">
        <text>(S)-2,3,4,5-tetrahydrodipicolinate + NAD(+) + H2O = (2S,4S)-4-hydroxy-2,3,4,5-tetrahydrodipicolinate + NADH + H(+)</text>
        <dbReference type="Rhea" id="RHEA:35323"/>
        <dbReference type="ChEBI" id="CHEBI:15377"/>
        <dbReference type="ChEBI" id="CHEBI:15378"/>
        <dbReference type="ChEBI" id="CHEBI:16845"/>
        <dbReference type="ChEBI" id="CHEBI:57540"/>
        <dbReference type="ChEBI" id="CHEBI:57945"/>
        <dbReference type="ChEBI" id="CHEBI:67139"/>
        <dbReference type="EC" id="1.17.1.8"/>
    </reaction>
</comment>
<comment type="catalytic activity">
    <reaction evidence="1">
        <text>(S)-2,3,4,5-tetrahydrodipicolinate + NADP(+) + H2O = (2S,4S)-4-hydroxy-2,3,4,5-tetrahydrodipicolinate + NADPH + H(+)</text>
        <dbReference type="Rhea" id="RHEA:35331"/>
        <dbReference type="ChEBI" id="CHEBI:15377"/>
        <dbReference type="ChEBI" id="CHEBI:15378"/>
        <dbReference type="ChEBI" id="CHEBI:16845"/>
        <dbReference type="ChEBI" id="CHEBI:57783"/>
        <dbReference type="ChEBI" id="CHEBI:58349"/>
        <dbReference type="ChEBI" id="CHEBI:67139"/>
        <dbReference type="EC" id="1.17.1.8"/>
    </reaction>
</comment>
<comment type="pathway">
    <text evidence="1">Amino-acid biosynthesis; L-lysine biosynthesis via DAP pathway; (S)-tetrahydrodipicolinate from L-aspartate: step 4/4.</text>
</comment>
<comment type="subcellular location">
    <subcellularLocation>
        <location evidence="1">Cytoplasm</location>
    </subcellularLocation>
</comment>
<comment type="similarity">
    <text evidence="1">Belongs to the DapB family.</text>
</comment>
<comment type="caution">
    <text evidence="2">Was originally thought to be a dihydrodipicolinate reductase (DHDPR), catalyzing the conversion of dihydrodipicolinate to tetrahydrodipicolinate. However, it was shown in E.coli that the substrate of the enzymatic reaction is not dihydrodipicolinate (DHDP) but in fact (2S,4S)-4-hydroxy-2,3,4,5-tetrahydrodipicolinic acid (HTPA), the product released by the DapA-catalyzed reaction.</text>
</comment>
<evidence type="ECO:0000255" key="1">
    <source>
        <dbReference type="HAMAP-Rule" id="MF_00102"/>
    </source>
</evidence>
<evidence type="ECO:0000305" key="2"/>
<name>DAPB_BRASO</name>
<reference key="1">
    <citation type="journal article" date="2007" name="Science">
        <title>Legumes symbioses: absence of nod genes in photosynthetic bradyrhizobia.</title>
        <authorList>
            <person name="Giraud E."/>
            <person name="Moulin L."/>
            <person name="Vallenet D."/>
            <person name="Barbe V."/>
            <person name="Cytryn E."/>
            <person name="Avarre J.-C."/>
            <person name="Jaubert M."/>
            <person name="Simon D."/>
            <person name="Cartieaux F."/>
            <person name="Prin Y."/>
            <person name="Bena G."/>
            <person name="Hannibal L."/>
            <person name="Fardoux J."/>
            <person name="Kojadinovic M."/>
            <person name="Vuillet L."/>
            <person name="Lajus A."/>
            <person name="Cruveiller S."/>
            <person name="Rouy Z."/>
            <person name="Mangenot S."/>
            <person name="Segurens B."/>
            <person name="Dossat C."/>
            <person name="Franck W.L."/>
            <person name="Chang W.-S."/>
            <person name="Saunders E."/>
            <person name="Bruce D."/>
            <person name="Richardson P."/>
            <person name="Normand P."/>
            <person name="Dreyfus B."/>
            <person name="Pignol D."/>
            <person name="Stacey G."/>
            <person name="Emerich D."/>
            <person name="Vermeglio A."/>
            <person name="Medigue C."/>
            <person name="Sadowsky M."/>
        </authorList>
    </citation>
    <scope>NUCLEOTIDE SEQUENCE [LARGE SCALE GENOMIC DNA]</scope>
    <source>
        <strain>ORS 278</strain>
    </source>
</reference>
<proteinExistence type="inferred from homology"/>
<gene>
    <name evidence="1" type="primary">dapB</name>
    <name type="ordered locus">BRADO0158</name>
</gene>
<accession>A4YJP9</accession>
<sequence>MSRMRLIVAGAGGRMGRALVRAIADSDGAELAGALEAPGSELIGKDSGLLAGLPANNIKLSADLWAMSAEADGILDFTVPAATIANVAIAAERGIVHVVGTTGLSASDDAVIKSVTKRAIVVQSGNMSLGVNLLSALVKQVAKSLDANFDIEILEMHHKHKVDAPSGTALMLGRAAAEGRGITLDGHSARGRDGITGARRSGDIGFASLRGGTAAGDHSVIFAGPSERLVLSHQAEDRMIFAHGALKAALWAHGKPPGYYTMDDVLGLKDLF</sequence>
<organism>
    <name type="scientific">Bradyrhizobium sp. (strain ORS 278)</name>
    <dbReference type="NCBI Taxonomy" id="114615"/>
    <lineage>
        <taxon>Bacteria</taxon>
        <taxon>Pseudomonadati</taxon>
        <taxon>Pseudomonadota</taxon>
        <taxon>Alphaproteobacteria</taxon>
        <taxon>Hyphomicrobiales</taxon>
        <taxon>Nitrobacteraceae</taxon>
        <taxon>Bradyrhizobium</taxon>
    </lineage>
</organism>
<dbReference type="EC" id="1.17.1.8" evidence="1"/>
<dbReference type="EMBL" id="CU234118">
    <property type="protein sequence ID" value="CAL74125.1"/>
    <property type="molecule type" value="Genomic_DNA"/>
</dbReference>
<dbReference type="RefSeq" id="WP_011923418.1">
    <property type="nucleotide sequence ID" value="NC_009445.1"/>
</dbReference>
<dbReference type="SMR" id="A4YJP9"/>
<dbReference type="STRING" id="114615.BRADO0158"/>
<dbReference type="KEGG" id="bra:BRADO0158"/>
<dbReference type="eggNOG" id="COG0289">
    <property type="taxonomic scope" value="Bacteria"/>
</dbReference>
<dbReference type="HOGENOM" id="CLU_047479_2_1_5"/>
<dbReference type="OrthoDB" id="9790352at2"/>
<dbReference type="UniPathway" id="UPA00034">
    <property type="reaction ID" value="UER00018"/>
</dbReference>
<dbReference type="Proteomes" id="UP000001994">
    <property type="component" value="Chromosome"/>
</dbReference>
<dbReference type="GO" id="GO:0005829">
    <property type="term" value="C:cytosol"/>
    <property type="evidence" value="ECO:0007669"/>
    <property type="project" value="TreeGrafter"/>
</dbReference>
<dbReference type="GO" id="GO:0008839">
    <property type="term" value="F:4-hydroxy-tetrahydrodipicolinate reductase"/>
    <property type="evidence" value="ECO:0007669"/>
    <property type="project" value="UniProtKB-EC"/>
</dbReference>
<dbReference type="GO" id="GO:0051287">
    <property type="term" value="F:NAD binding"/>
    <property type="evidence" value="ECO:0007669"/>
    <property type="project" value="UniProtKB-UniRule"/>
</dbReference>
<dbReference type="GO" id="GO:0050661">
    <property type="term" value="F:NADP binding"/>
    <property type="evidence" value="ECO:0007669"/>
    <property type="project" value="UniProtKB-UniRule"/>
</dbReference>
<dbReference type="GO" id="GO:0016726">
    <property type="term" value="F:oxidoreductase activity, acting on CH or CH2 groups, NAD or NADP as acceptor"/>
    <property type="evidence" value="ECO:0007669"/>
    <property type="project" value="UniProtKB-UniRule"/>
</dbReference>
<dbReference type="GO" id="GO:0019877">
    <property type="term" value="P:diaminopimelate biosynthetic process"/>
    <property type="evidence" value="ECO:0007669"/>
    <property type="project" value="UniProtKB-UniRule"/>
</dbReference>
<dbReference type="GO" id="GO:0009089">
    <property type="term" value="P:lysine biosynthetic process via diaminopimelate"/>
    <property type="evidence" value="ECO:0007669"/>
    <property type="project" value="UniProtKB-UniRule"/>
</dbReference>
<dbReference type="CDD" id="cd02274">
    <property type="entry name" value="DHDPR_N"/>
    <property type="match status" value="1"/>
</dbReference>
<dbReference type="FunFam" id="3.30.360.10:FF:000004">
    <property type="entry name" value="4-hydroxy-tetrahydrodipicolinate reductase"/>
    <property type="match status" value="1"/>
</dbReference>
<dbReference type="Gene3D" id="3.30.360.10">
    <property type="entry name" value="Dihydrodipicolinate Reductase, domain 2"/>
    <property type="match status" value="1"/>
</dbReference>
<dbReference type="Gene3D" id="3.40.50.720">
    <property type="entry name" value="NAD(P)-binding Rossmann-like Domain"/>
    <property type="match status" value="1"/>
</dbReference>
<dbReference type="HAMAP" id="MF_00102">
    <property type="entry name" value="DapB"/>
    <property type="match status" value="1"/>
</dbReference>
<dbReference type="InterPro" id="IPR022663">
    <property type="entry name" value="DapB_C"/>
</dbReference>
<dbReference type="InterPro" id="IPR000846">
    <property type="entry name" value="DapB_N"/>
</dbReference>
<dbReference type="InterPro" id="IPR022664">
    <property type="entry name" value="DapB_N_CS"/>
</dbReference>
<dbReference type="InterPro" id="IPR023940">
    <property type="entry name" value="DHDPR_bac"/>
</dbReference>
<dbReference type="InterPro" id="IPR036291">
    <property type="entry name" value="NAD(P)-bd_dom_sf"/>
</dbReference>
<dbReference type="NCBIfam" id="TIGR00036">
    <property type="entry name" value="dapB"/>
    <property type="match status" value="1"/>
</dbReference>
<dbReference type="PANTHER" id="PTHR20836:SF0">
    <property type="entry name" value="4-HYDROXY-TETRAHYDRODIPICOLINATE REDUCTASE 1, CHLOROPLASTIC-RELATED"/>
    <property type="match status" value="1"/>
</dbReference>
<dbReference type="PANTHER" id="PTHR20836">
    <property type="entry name" value="DIHYDRODIPICOLINATE REDUCTASE"/>
    <property type="match status" value="1"/>
</dbReference>
<dbReference type="Pfam" id="PF05173">
    <property type="entry name" value="DapB_C"/>
    <property type="match status" value="1"/>
</dbReference>
<dbReference type="Pfam" id="PF01113">
    <property type="entry name" value="DapB_N"/>
    <property type="match status" value="1"/>
</dbReference>
<dbReference type="PIRSF" id="PIRSF000161">
    <property type="entry name" value="DHPR"/>
    <property type="match status" value="1"/>
</dbReference>
<dbReference type="SUPFAM" id="SSF55347">
    <property type="entry name" value="Glyceraldehyde-3-phosphate dehydrogenase-like, C-terminal domain"/>
    <property type="match status" value="1"/>
</dbReference>
<dbReference type="SUPFAM" id="SSF51735">
    <property type="entry name" value="NAD(P)-binding Rossmann-fold domains"/>
    <property type="match status" value="1"/>
</dbReference>
<dbReference type="PROSITE" id="PS01298">
    <property type="entry name" value="DAPB"/>
    <property type="match status" value="1"/>
</dbReference>
<keyword id="KW-0028">Amino-acid biosynthesis</keyword>
<keyword id="KW-0963">Cytoplasm</keyword>
<keyword id="KW-0220">Diaminopimelate biosynthesis</keyword>
<keyword id="KW-0457">Lysine biosynthesis</keyword>
<keyword id="KW-0520">NAD</keyword>
<keyword id="KW-0521">NADP</keyword>
<keyword id="KW-0560">Oxidoreductase</keyword>
<keyword id="KW-1185">Reference proteome</keyword>
<protein>
    <recommendedName>
        <fullName evidence="1">4-hydroxy-tetrahydrodipicolinate reductase</fullName>
        <shortName evidence="1">HTPA reductase</shortName>
        <ecNumber evidence="1">1.17.1.8</ecNumber>
    </recommendedName>
</protein>